<feature type="chain" id="PRO_1000185120" description="Probable potassium transport system protein Kup">
    <location>
        <begin position="1"/>
        <end position="667"/>
    </location>
</feature>
<feature type="transmembrane region" description="Helical" evidence="1">
    <location>
        <begin position="16"/>
        <end position="36"/>
    </location>
</feature>
<feature type="transmembrane region" description="Helical" evidence="1">
    <location>
        <begin position="58"/>
        <end position="78"/>
    </location>
</feature>
<feature type="transmembrane region" description="Helical" evidence="1">
    <location>
        <begin position="101"/>
        <end position="121"/>
    </location>
</feature>
<feature type="transmembrane region" description="Helical" evidence="1">
    <location>
        <begin position="146"/>
        <end position="166"/>
    </location>
</feature>
<feature type="transmembrane region" description="Helical" evidence="1">
    <location>
        <begin position="167"/>
        <end position="187"/>
    </location>
</feature>
<feature type="transmembrane region" description="Helical" evidence="1">
    <location>
        <begin position="221"/>
        <end position="241"/>
    </location>
</feature>
<feature type="transmembrane region" description="Helical" evidence="1">
    <location>
        <begin position="253"/>
        <end position="273"/>
    </location>
</feature>
<feature type="transmembrane region" description="Helical" evidence="1">
    <location>
        <begin position="294"/>
        <end position="314"/>
    </location>
</feature>
<feature type="transmembrane region" description="Helical" evidence="1">
    <location>
        <begin position="343"/>
        <end position="363"/>
    </location>
</feature>
<feature type="transmembrane region" description="Helical" evidence="1">
    <location>
        <begin position="373"/>
        <end position="393"/>
    </location>
</feature>
<feature type="transmembrane region" description="Helical" evidence="1">
    <location>
        <begin position="399"/>
        <end position="419"/>
    </location>
</feature>
<feature type="transmembrane region" description="Helical" evidence="1">
    <location>
        <begin position="424"/>
        <end position="444"/>
    </location>
</feature>
<sequence>MSNAHHDAFDKATKAGFIIALGIVYGDIGTSPLYTMQSLVDNQGGLSQVSEAFILGSVSLIIWTLTLVTTIKYVLIALKADNHHEGGIFSLFTLVRRMSRWLIIPAMLGGATLLSDGALTPAVTVTSAIEGLKAVPELSSIYQNQTNVILTTLLILMVLFGLQRFGTGVIGKLFGPVMLVWFSVLGISGLLNSLQHLEILKAINPYYALHLLVSPENHRGIFILGSIFLATTGAEALYSDLGHVGRGNIYASWPFVKVCIILSYCGQAAWILAHKDSGIALNPFFASVPEGLRVYLVILATLAAIIASQALISGSFTLVSEAMRLKIFPLFKITYPGANLGQLYIPVINWSLFAVTSCTVLYFRTSAHMEAAYGLAITITMLMTTILLAYYLIKEGVKPLLASLLMAFFAFIEFIFFLASAVKFMHGGYVVVVLALAIVFVMVIWHAGTMIVAKYVKSLSLNDYKHQIKLLRDDLRFDLYQTNVVYLTNRMKKDLIDRSILYSILDKRPKRAQVYWFVNVRVTDEPYTATYKVDMLETDYIVCVELYLGFRMPQTVPRYLRTIVQDLMESGRLPKQAQDYTITPGREVGDFRFVIIEERVSHARQLSTLERFVMQTKASIKHVTASPMRWFGLQYSEATVEVVPLLLSDVLKLPIKEIKACTKDEKA</sequence>
<gene>
    <name evidence="1" type="primary">kup</name>
    <name type="ordered locus">SEQ_0671</name>
</gene>
<proteinExistence type="inferred from homology"/>
<dbReference type="EMBL" id="FM204883">
    <property type="protein sequence ID" value="CAW93009.1"/>
    <property type="molecule type" value="Genomic_DNA"/>
</dbReference>
<dbReference type="RefSeq" id="WP_012679205.1">
    <property type="nucleotide sequence ID" value="NC_012471.1"/>
</dbReference>
<dbReference type="KEGG" id="seu:SEQ_0671"/>
<dbReference type="HOGENOM" id="CLU_008142_4_1_9"/>
<dbReference type="OrthoDB" id="9805577at2"/>
<dbReference type="Proteomes" id="UP000001365">
    <property type="component" value="Chromosome"/>
</dbReference>
<dbReference type="GO" id="GO:0005886">
    <property type="term" value="C:plasma membrane"/>
    <property type="evidence" value="ECO:0007669"/>
    <property type="project" value="UniProtKB-SubCell"/>
</dbReference>
<dbReference type="GO" id="GO:0015079">
    <property type="term" value="F:potassium ion transmembrane transporter activity"/>
    <property type="evidence" value="ECO:0007669"/>
    <property type="project" value="UniProtKB-UniRule"/>
</dbReference>
<dbReference type="GO" id="GO:0015293">
    <property type="term" value="F:symporter activity"/>
    <property type="evidence" value="ECO:0007669"/>
    <property type="project" value="UniProtKB-UniRule"/>
</dbReference>
<dbReference type="HAMAP" id="MF_01522">
    <property type="entry name" value="Kup"/>
    <property type="match status" value="1"/>
</dbReference>
<dbReference type="InterPro" id="IPR003855">
    <property type="entry name" value="K+_transporter"/>
</dbReference>
<dbReference type="InterPro" id="IPR053952">
    <property type="entry name" value="K_trans_C"/>
</dbReference>
<dbReference type="InterPro" id="IPR053951">
    <property type="entry name" value="K_trans_N"/>
</dbReference>
<dbReference type="InterPro" id="IPR023051">
    <property type="entry name" value="Kup"/>
</dbReference>
<dbReference type="PANTHER" id="PTHR30540:SF83">
    <property type="entry name" value="K+ POTASSIUM TRANSPORTER"/>
    <property type="match status" value="1"/>
</dbReference>
<dbReference type="PANTHER" id="PTHR30540">
    <property type="entry name" value="OSMOTIC STRESS POTASSIUM TRANSPORTER"/>
    <property type="match status" value="1"/>
</dbReference>
<dbReference type="Pfam" id="PF02705">
    <property type="entry name" value="K_trans"/>
    <property type="match status" value="1"/>
</dbReference>
<dbReference type="Pfam" id="PF22776">
    <property type="entry name" value="K_trans_C"/>
    <property type="match status" value="1"/>
</dbReference>
<name>KUP_STRE4</name>
<protein>
    <recommendedName>
        <fullName evidence="1">Probable potassium transport system protein Kup</fullName>
    </recommendedName>
</protein>
<accession>C0M958</accession>
<keyword id="KW-1003">Cell membrane</keyword>
<keyword id="KW-0406">Ion transport</keyword>
<keyword id="KW-0472">Membrane</keyword>
<keyword id="KW-0630">Potassium</keyword>
<keyword id="KW-0633">Potassium transport</keyword>
<keyword id="KW-0769">Symport</keyword>
<keyword id="KW-0812">Transmembrane</keyword>
<keyword id="KW-1133">Transmembrane helix</keyword>
<keyword id="KW-0813">Transport</keyword>
<reference key="1">
    <citation type="journal article" date="2009" name="PLoS Pathog.">
        <title>Genomic evidence for the evolution of Streptococcus equi: host restriction, increased virulence, and genetic exchange with human pathogens.</title>
        <authorList>
            <person name="Holden M.T.G."/>
            <person name="Heather Z."/>
            <person name="Paillot R."/>
            <person name="Steward K.F."/>
            <person name="Webb K."/>
            <person name="Ainslie F."/>
            <person name="Jourdan T."/>
            <person name="Bason N.C."/>
            <person name="Holroyd N.E."/>
            <person name="Mungall K."/>
            <person name="Quail M.A."/>
            <person name="Sanders M."/>
            <person name="Simmonds M."/>
            <person name="Willey D."/>
            <person name="Brooks K."/>
            <person name="Aanensen D.M."/>
            <person name="Spratt B.G."/>
            <person name="Jolley K.A."/>
            <person name="Maiden M.C.J."/>
            <person name="Kehoe M."/>
            <person name="Chanter N."/>
            <person name="Bentley S.D."/>
            <person name="Robinson C."/>
            <person name="Maskell D.J."/>
            <person name="Parkhill J."/>
            <person name="Waller A.S."/>
        </authorList>
    </citation>
    <scope>NUCLEOTIDE SEQUENCE [LARGE SCALE GENOMIC DNA]</scope>
    <source>
        <strain>4047</strain>
    </source>
</reference>
<organism>
    <name type="scientific">Streptococcus equi subsp. equi (strain 4047)</name>
    <dbReference type="NCBI Taxonomy" id="553482"/>
    <lineage>
        <taxon>Bacteria</taxon>
        <taxon>Bacillati</taxon>
        <taxon>Bacillota</taxon>
        <taxon>Bacilli</taxon>
        <taxon>Lactobacillales</taxon>
        <taxon>Streptococcaceae</taxon>
        <taxon>Streptococcus</taxon>
    </lineage>
</organism>
<evidence type="ECO:0000255" key="1">
    <source>
        <dbReference type="HAMAP-Rule" id="MF_01522"/>
    </source>
</evidence>
<comment type="function">
    <text evidence="1">Transport of potassium into the cell. Likely operates as a K(+):H(+) symporter.</text>
</comment>
<comment type="catalytic activity">
    <reaction evidence="1">
        <text>K(+)(in) + H(+)(in) = K(+)(out) + H(+)(out)</text>
        <dbReference type="Rhea" id="RHEA:28490"/>
        <dbReference type="ChEBI" id="CHEBI:15378"/>
        <dbReference type="ChEBI" id="CHEBI:29103"/>
    </reaction>
    <physiologicalReaction direction="right-to-left" evidence="1">
        <dbReference type="Rhea" id="RHEA:28492"/>
    </physiologicalReaction>
</comment>
<comment type="subcellular location">
    <subcellularLocation>
        <location evidence="1">Cell membrane</location>
        <topology evidence="1">Multi-pass membrane protein</topology>
    </subcellularLocation>
</comment>
<comment type="similarity">
    <text evidence="1">Belongs to the HAK/KUP transporter (TC 2.A.72) family.</text>
</comment>